<organism>
    <name type="scientific">Syntrophobacter fumaroxidans (strain DSM 10017 / MPOB)</name>
    <dbReference type="NCBI Taxonomy" id="335543"/>
    <lineage>
        <taxon>Bacteria</taxon>
        <taxon>Pseudomonadati</taxon>
        <taxon>Thermodesulfobacteriota</taxon>
        <taxon>Syntrophobacteria</taxon>
        <taxon>Syntrophobacterales</taxon>
        <taxon>Syntrophobacteraceae</taxon>
        <taxon>Syntrophobacter</taxon>
    </lineage>
</organism>
<name>MUTL_SYNFM</name>
<sequence>MARITILPDILCNQIAAGEVVERPAAVAKELLENSIDAGARRISLSIADGGRKEIRVVDNGSGMHPDDALLALERHATSKIRSIEDLQAIGSLGFRGEALPSIAAVSRFELVTREPDAVAGTFIRVEGGVVREVRETGSPAGTRITVRDLFYNVPARRKFLRAADTETAYICDQFQRLAMAHHAVHFQLINRERTQYDFPGAASPEERAGQVLGAETLKRAIPFCVENASARLRGMVGTPDLQRANSHSLFVFVNGRPVWDRAVNRAILAAFESLIPRGKFPVAVLFLELDPLHVDVNVHPTKREVRFKHPGGVIDTVRGAIRDALCHLRPLHGSAAAAPRPFSETADQRAFRDSLVREGQLSFDRGRPLSRPPGFPSERWRERHRPDAEPPYPLLREPAPTENPRREAGSPPAAPADSLFDEGAAPQPDNPDTDFFAEPKRAAGGPASTHAPVTVDTAAFADAFQAFEAATHLHAGDVPALAELPVIGQLANTYILLEAPDGLILIDQHAAHERIIFDALSFPAGGPARQRLIRPAVIDLPPRDAAMLRRWLPLLEEIGVEIESFGGDSFVVHAVPAPLGECPPEGLVRELLASAIEGDDAPRWNVLGRLAKTAACHRAVRAGQRLRPEEIRLLLEGLDRTRFASTCPHGRPVWYKMTLSDVARLFQRT</sequence>
<reference key="1">
    <citation type="submission" date="2006-10" db="EMBL/GenBank/DDBJ databases">
        <title>Complete sequence of Syntrophobacter fumaroxidans MPOB.</title>
        <authorList>
            <consortium name="US DOE Joint Genome Institute"/>
            <person name="Copeland A."/>
            <person name="Lucas S."/>
            <person name="Lapidus A."/>
            <person name="Barry K."/>
            <person name="Detter J.C."/>
            <person name="Glavina del Rio T."/>
            <person name="Hammon N."/>
            <person name="Israni S."/>
            <person name="Pitluck S."/>
            <person name="Goltsman E.G."/>
            <person name="Martinez M."/>
            <person name="Schmutz J."/>
            <person name="Larimer F."/>
            <person name="Land M."/>
            <person name="Hauser L."/>
            <person name="Kyrpides N."/>
            <person name="Kim E."/>
            <person name="Boone D.R."/>
            <person name="Brockman F."/>
            <person name="Culley D."/>
            <person name="Ferry J."/>
            <person name="Gunsalus R."/>
            <person name="McInerney M.J."/>
            <person name="Morrison M."/>
            <person name="Plugge C."/>
            <person name="Rohlin L."/>
            <person name="Scholten J."/>
            <person name="Sieber J."/>
            <person name="Stams A.J.M."/>
            <person name="Worm P."/>
            <person name="Henstra A.M."/>
            <person name="Richardson P."/>
        </authorList>
    </citation>
    <scope>NUCLEOTIDE SEQUENCE [LARGE SCALE GENOMIC DNA]</scope>
    <source>
        <strain>DSM 10017 / MPOB</strain>
    </source>
</reference>
<evidence type="ECO:0000255" key="1">
    <source>
        <dbReference type="HAMAP-Rule" id="MF_00149"/>
    </source>
</evidence>
<evidence type="ECO:0000256" key="2">
    <source>
        <dbReference type="SAM" id="MobiDB-lite"/>
    </source>
</evidence>
<feature type="chain" id="PRO_1000192186" description="DNA mismatch repair protein MutL">
    <location>
        <begin position="1"/>
        <end position="670"/>
    </location>
</feature>
<feature type="region of interest" description="Disordered" evidence="2">
    <location>
        <begin position="363"/>
        <end position="451"/>
    </location>
</feature>
<feature type="compositionally biased region" description="Basic and acidic residues" evidence="2">
    <location>
        <begin position="379"/>
        <end position="389"/>
    </location>
</feature>
<keyword id="KW-0227">DNA damage</keyword>
<keyword id="KW-0234">DNA repair</keyword>
<keyword id="KW-1185">Reference proteome</keyword>
<dbReference type="EMBL" id="CP000478">
    <property type="protein sequence ID" value="ABK17604.1"/>
    <property type="molecule type" value="Genomic_DNA"/>
</dbReference>
<dbReference type="RefSeq" id="WP_011698774.1">
    <property type="nucleotide sequence ID" value="NC_008554.1"/>
</dbReference>
<dbReference type="SMR" id="A0LJK2"/>
<dbReference type="FunCoup" id="A0LJK2">
    <property type="interactions" value="262"/>
</dbReference>
<dbReference type="STRING" id="335543.Sfum_1919"/>
<dbReference type="KEGG" id="sfu:Sfum_1919"/>
<dbReference type="eggNOG" id="COG0323">
    <property type="taxonomic scope" value="Bacteria"/>
</dbReference>
<dbReference type="HOGENOM" id="CLU_004131_4_2_7"/>
<dbReference type="InParanoid" id="A0LJK2"/>
<dbReference type="OrthoDB" id="9763467at2"/>
<dbReference type="Proteomes" id="UP000001784">
    <property type="component" value="Chromosome"/>
</dbReference>
<dbReference type="GO" id="GO:0032300">
    <property type="term" value="C:mismatch repair complex"/>
    <property type="evidence" value="ECO:0007669"/>
    <property type="project" value="InterPro"/>
</dbReference>
<dbReference type="GO" id="GO:0005524">
    <property type="term" value="F:ATP binding"/>
    <property type="evidence" value="ECO:0007669"/>
    <property type="project" value="InterPro"/>
</dbReference>
<dbReference type="GO" id="GO:0016887">
    <property type="term" value="F:ATP hydrolysis activity"/>
    <property type="evidence" value="ECO:0007669"/>
    <property type="project" value="InterPro"/>
</dbReference>
<dbReference type="GO" id="GO:0140664">
    <property type="term" value="F:ATP-dependent DNA damage sensor activity"/>
    <property type="evidence" value="ECO:0007669"/>
    <property type="project" value="InterPro"/>
</dbReference>
<dbReference type="GO" id="GO:0030983">
    <property type="term" value="F:mismatched DNA binding"/>
    <property type="evidence" value="ECO:0007669"/>
    <property type="project" value="InterPro"/>
</dbReference>
<dbReference type="GO" id="GO:0006298">
    <property type="term" value="P:mismatch repair"/>
    <property type="evidence" value="ECO:0007669"/>
    <property type="project" value="UniProtKB-UniRule"/>
</dbReference>
<dbReference type="CDD" id="cd16926">
    <property type="entry name" value="HATPase_MutL-MLH-PMS-like"/>
    <property type="match status" value="1"/>
</dbReference>
<dbReference type="CDD" id="cd00782">
    <property type="entry name" value="MutL_Trans"/>
    <property type="match status" value="1"/>
</dbReference>
<dbReference type="FunFam" id="3.30.565.10:FF:000003">
    <property type="entry name" value="DNA mismatch repair endonuclease MutL"/>
    <property type="match status" value="1"/>
</dbReference>
<dbReference type="Gene3D" id="3.30.230.10">
    <property type="match status" value="1"/>
</dbReference>
<dbReference type="Gene3D" id="3.30.565.10">
    <property type="entry name" value="Histidine kinase-like ATPase, C-terminal domain"/>
    <property type="match status" value="1"/>
</dbReference>
<dbReference type="Gene3D" id="3.30.1540.20">
    <property type="entry name" value="MutL, C-terminal domain, dimerisation subdomain"/>
    <property type="match status" value="1"/>
</dbReference>
<dbReference type="Gene3D" id="3.30.1370.100">
    <property type="entry name" value="MutL, C-terminal domain, regulatory subdomain"/>
    <property type="match status" value="1"/>
</dbReference>
<dbReference type="HAMAP" id="MF_00149">
    <property type="entry name" value="DNA_mis_repair"/>
    <property type="match status" value="1"/>
</dbReference>
<dbReference type="InterPro" id="IPR014762">
    <property type="entry name" value="DNA_mismatch_repair_CS"/>
</dbReference>
<dbReference type="InterPro" id="IPR020667">
    <property type="entry name" value="DNA_mismatch_repair_MutL"/>
</dbReference>
<dbReference type="InterPro" id="IPR013507">
    <property type="entry name" value="DNA_mismatch_S5_2-like"/>
</dbReference>
<dbReference type="InterPro" id="IPR036890">
    <property type="entry name" value="HATPase_C_sf"/>
</dbReference>
<dbReference type="InterPro" id="IPR002099">
    <property type="entry name" value="MutL/Mlh/PMS"/>
</dbReference>
<dbReference type="InterPro" id="IPR038973">
    <property type="entry name" value="MutL/Mlh/Pms-like"/>
</dbReference>
<dbReference type="InterPro" id="IPR014790">
    <property type="entry name" value="MutL_C"/>
</dbReference>
<dbReference type="InterPro" id="IPR042120">
    <property type="entry name" value="MutL_C_dimsub"/>
</dbReference>
<dbReference type="InterPro" id="IPR042121">
    <property type="entry name" value="MutL_C_regsub"/>
</dbReference>
<dbReference type="InterPro" id="IPR037198">
    <property type="entry name" value="MutL_C_sf"/>
</dbReference>
<dbReference type="InterPro" id="IPR020568">
    <property type="entry name" value="Ribosomal_Su5_D2-typ_SF"/>
</dbReference>
<dbReference type="InterPro" id="IPR014721">
    <property type="entry name" value="Ribsml_uS5_D2-typ_fold_subgr"/>
</dbReference>
<dbReference type="NCBIfam" id="TIGR00585">
    <property type="entry name" value="mutl"/>
    <property type="match status" value="1"/>
</dbReference>
<dbReference type="PANTHER" id="PTHR10073">
    <property type="entry name" value="DNA MISMATCH REPAIR PROTEIN MLH, PMS, MUTL"/>
    <property type="match status" value="1"/>
</dbReference>
<dbReference type="PANTHER" id="PTHR10073:SF12">
    <property type="entry name" value="DNA MISMATCH REPAIR PROTEIN MLH1"/>
    <property type="match status" value="1"/>
</dbReference>
<dbReference type="Pfam" id="PF01119">
    <property type="entry name" value="DNA_mis_repair"/>
    <property type="match status" value="1"/>
</dbReference>
<dbReference type="Pfam" id="PF13589">
    <property type="entry name" value="HATPase_c_3"/>
    <property type="match status" value="1"/>
</dbReference>
<dbReference type="Pfam" id="PF08676">
    <property type="entry name" value="MutL_C"/>
    <property type="match status" value="1"/>
</dbReference>
<dbReference type="SMART" id="SM01340">
    <property type="entry name" value="DNA_mis_repair"/>
    <property type="match status" value="1"/>
</dbReference>
<dbReference type="SMART" id="SM00853">
    <property type="entry name" value="MutL_C"/>
    <property type="match status" value="1"/>
</dbReference>
<dbReference type="SUPFAM" id="SSF55874">
    <property type="entry name" value="ATPase domain of HSP90 chaperone/DNA topoisomerase II/histidine kinase"/>
    <property type="match status" value="1"/>
</dbReference>
<dbReference type="SUPFAM" id="SSF118116">
    <property type="entry name" value="DNA mismatch repair protein MutL"/>
    <property type="match status" value="1"/>
</dbReference>
<dbReference type="SUPFAM" id="SSF54211">
    <property type="entry name" value="Ribosomal protein S5 domain 2-like"/>
    <property type="match status" value="1"/>
</dbReference>
<dbReference type="PROSITE" id="PS00058">
    <property type="entry name" value="DNA_MISMATCH_REPAIR_1"/>
    <property type="match status" value="1"/>
</dbReference>
<protein>
    <recommendedName>
        <fullName evidence="1">DNA mismatch repair protein MutL</fullName>
    </recommendedName>
</protein>
<comment type="function">
    <text evidence="1">This protein is involved in the repair of mismatches in DNA. It is required for dam-dependent methyl-directed DNA mismatch repair. May act as a 'molecular matchmaker', a protein that promotes the formation of a stable complex between two or more DNA-binding proteins in an ATP-dependent manner without itself being part of a final effector complex.</text>
</comment>
<comment type="similarity">
    <text evidence="1">Belongs to the DNA mismatch repair MutL/HexB family.</text>
</comment>
<gene>
    <name evidence="1" type="primary">mutL</name>
    <name type="ordered locus">Sfum_1919</name>
</gene>
<accession>A0LJK2</accession>
<proteinExistence type="inferred from homology"/>